<name>CND_CAEEL</name>
<dbReference type="EMBL" id="BX284601">
    <property type="protein sequence ID" value="CCD66189.1"/>
    <property type="molecule type" value="Genomic_DNA"/>
</dbReference>
<dbReference type="EMBL" id="BX284601">
    <property type="protein sequence ID" value="CCD66190.1"/>
    <property type="molecule type" value="Genomic_DNA"/>
</dbReference>
<dbReference type="RefSeq" id="NP_491537.1">
    <molecule id="Q95Y84-1"/>
    <property type="nucleotide sequence ID" value="NM_059136.4"/>
</dbReference>
<dbReference type="RefSeq" id="NP_491538.1">
    <molecule id="Q95Y84-2"/>
    <property type="nucleotide sequence ID" value="NM_059137.6"/>
</dbReference>
<dbReference type="ComplexPortal" id="CPX-1272">
    <property type="entry name" value="Condensin II complex"/>
</dbReference>
<dbReference type="FunCoup" id="Q95Y84">
    <property type="interactions" value="282"/>
</dbReference>
<dbReference type="IntAct" id="Q95Y84">
    <property type="interactions" value="6"/>
</dbReference>
<dbReference type="STRING" id="6239.Y110A7A.1b.1"/>
<dbReference type="PaxDb" id="6239-Y110A7A.1b"/>
<dbReference type="PeptideAtlas" id="Q95Y84"/>
<dbReference type="EnsemblMetazoa" id="Y110A7A.1a.1">
    <molecule id="Q95Y84-2"/>
    <property type="protein sequence ID" value="Y110A7A.1a.1"/>
    <property type="gene ID" value="WBGene00001833"/>
</dbReference>
<dbReference type="EnsemblMetazoa" id="Y110A7A.1b.1">
    <molecule id="Q95Y84-1"/>
    <property type="protein sequence ID" value="Y110A7A.1b.1"/>
    <property type="gene ID" value="WBGene00001833"/>
</dbReference>
<dbReference type="GeneID" id="266830"/>
<dbReference type="KEGG" id="cel:CELE_Y110A7A.1"/>
<dbReference type="UCSC" id="Y110A7A.1b">
    <property type="organism name" value="c. elegans"/>
</dbReference>
<dbReference type="AGR" id="WB:WBGene00001833"/>
<dbReference type="CTD" id="266830"/>
<dbReference type="WormBase" id="Y110A7A.1a">
    <molecule id="Q95Y84-2"/>
    <property type="protein sequence ID" value="CE24117"/>
    <property type="gene ID" value="WBGene00001833"/>
    <property type="gene designation" value="hcp-6"/>
</dbReference>
<dbReference type="WormBase" id="Y110A7A.1b">
    <molecule id="Q95Y84-1"/>
    <property type="protein sequence ID" value="CE28104"/>
    <property type="gene ID" value="WBGene00001833"/>
    <property type="gene designation" value="hcp-6"/>
</dbReference>
<dbReference type="eggNOG" id="KOG0413">
    <property type="taxonomic scope" value="Eukaryota"/>
</dbReference>
<dbReference type="GeneTree" id="ENSGT00940000153566"/>
<dbReference type="HOGENOM" id="CLU_002816_0_0_1"/>
<dbReference type="InParanoid" id="Q95Y84"/>
<dbReference type="OMA" id="AIRMICI"/>
<dbReference type="OrthoDB" id="10263978at2759"/>
<dbReference type="PhylomeDB" id="Q95Y84"/>
<dbReference type="Reactome" id="R-CEL-2299718">
    <property type="pathway name" value="Condensation of Prophase Chromosomes"/>
</dbReference>
<dbReference type="PRO" id="PR:Q95Y84"/>
<dbReference type="Proteomes" id="UP000001940">
    <property type="component" value="Chromosome I"/>
</dbReference>
<dbReference type="Bgee" id="WBGene00001833">
    <property type="expression patterns" value="Expressed in germ line (C elegans) and 4 other cell types or tissues"/>
</dbReference>
<dbReference type="ExpressionAtlas" id="Q95Y84">
    <property type="expression patterns" value="baseline and differential"/>
</dbReference>
<dbReference type="GO" id="GO:0000793">
    <property type="term" value="C:condensed chromosome"/>
    <property type="evidence" value="ECO:0000314"/>
    <property type="project" value="WormBase"/>
</dbReference>
<dbReference type="GO" id="GO:0000779">
    <property type="term" value="C:condensed chromosome, centromeric region"/>
    <property type="evidence" value="ECO:0000314"/>
    <property type="project" value="WormBase"/>
</dbReference>
<dbReference type="GO" id="GO:0000796">
    <property type="term" value="C:condensin complex"/>
    <property type="evidence" value="ECO:0000314"/>
    <property type="project" value="WormBase"/>
</dbReference>
<dbReference type="GO" id="GO:0005654">
    <property type="term" value="C:nucleoplasm"/>
    <property type="evidence" value="ECO:0000314"/>
    <property type="project" value="WormBase"/>
</dbReference>
<dbReference type="GO" id="GO:0042393">
    <property type="term" value="F:histone binding"/>
    <property type="evidence" value="ECO:0000318"/>
    <property type="project" value="GO_Central"/>
</dbReference>
<dbReference type="GO" id="GO:0051315">
    <property type="term" value="P:attachment of mitotic spindle microtubules to kinetochore"/>
    <property type="evidence" value="ECO:0000315"/>
    <property type="project" value="WormBase"/>
</dbReference>
<dbReference type="GO" id="GO:0051301">
    <property type="term" value="P:cell division"/>
    <property type="evidence" value="ECO:0007669"/>
    <property type="project" value="UniProtKB-KW"/>
</dbReference>
<dbReference type="GO" id="GO:0009792">
    <property type="term" value="P:embryo development ending in birth or egg hatching"/>
    <property type="evidence" value="ECO:0000315"/>
    <property type="project" value="WormBase"/>
</dbReference>
<dbReference type="GO" id="GO:0010032">
    <property type="term" value="P:meiotic chromosome condensation"/>
    <property type="evidence" value="ECO:0000318"/>
    <property type="project" value="GO_Central"/>
</dbReference>
<dbReference type="GO" id="GO:0045132">
    <property type="term" value="P:meiotic chromosome segregation"/>
    <property type="evidence" value="ECO:0000303"/>
    <property type="project" value="ComplexPortal"/>
</dbReference>
<dbReference type="GO" id="GO:0007076">
    <property type="term" value="P:mitotic chromosome condensation"/>
    <property type="evidence" value="ECO:0000315"/>
    <property type="project" value="WormBase"/>
</dbReference>
<dbReference type="GO" id="GO:0000070">
    <property type="term" value="P:mitotic sister chromatid segregation"/>
    <property type="evidence" value="ECO:0000315"/>
    <property type="project" value="WormBase"/>
</dbReference>
<dbReference type="FunFam" id="1.25.10.10:FF:001510">
    <property type="entry name" value="Condensin-2 complex subunit"/>
    <property type="match status" value="1"/>
</dbReference>
<dbReference type="Gene3D" id="1.25.10.10">
    <property type="entry name" value="Leucine-rich Repeat Variant"/>
    <property type="match status" value="2"/>
</dbReference>
<dbReference type="InterPro" id="IPR011989">
    <property type="entry name" value="ARM-like"/>
</dbReference>
<dbReference type="InterPro" id="IPR016024">
    <property type="entry name" value="ARM-type_fold"/>
</dbReference>
<dbReference type="InterPro" id="IPR026971">
    <property type="entry name" value="CND1/NCAPD3"/>
</dbReference>
<dbReference type="InterPro" id="IPR032682">
    <property type="entry name" value="Cnd1_C"/>
</dbReference>
<dbReference type="InterPro" id="IPR012371">
    <property type="entry name" value="NCAPD3"/>
</dbReference>
<dbReference type="PANTHER" id="PTHR14222">
    <property type="entry name" value="CONDENSIN"/>
    <property type="match status" value="1"/>
</dbReference>
<dbReference type="PANTHER" id="PTHR14222:SF1">
    <property type="entry name" value="CONDENSIN-2 COMPLEX SUBUNIT D3"/>
    <property type="match status" value="1"/>
</dbReference>
<dbReference type="Pfam" id="PF12717">
    <property type="entry name" value="Cnd1"/>
    <property type="match status" value="1"/>
</dbReference>
<dbReference type="PIRSF" id="PIRSF036508">
    <property type="entry name" value="Condns_HCP-6"/>
    <property type="match status" value="1"/>
</dbReference>
<dbReference type="SUPFAM" id="SSF48371">
    <property type="entry name" value="ARM repeat"/>
    <property type="match status" value="1"/>
</dbReference>
<reference evidence="9" key="1">
    <citation type="journal article" date="1998" name="Science">
        <title>Genome sequence of the nematode C. elegans: a platform for investigating biology.</title>
        <authorList>
            <consortium name="The C. elegans sequencing consortium"/>
        </authorList>
    </citation>
    <scope>NUCLEOTIDE SEQUENCE [LARGE SCALE GENOMIC DNA]</scope>
    <source>
        <strain evidence="9">Bristol N2</strain>
    </source>
</reference>
<reference evidence="8" key="2">
    <citation type="journal article" date="2002" name="Genes Dev.">
        <title>Characterization of HCP-6, a C. elegans protein required to prevent chromosome twisting and merotelic attachment.</title>
        <authorList>
            <person name="Stear J.H."/>
            <person name="Roth M.B."/>
        </authorList>
    </citation>
    <scope>FUNCTION</scope>
    <scope>SUBCELLULAR LOCATION</scope>
    <scope>DISRUPTION PHENOTYPE</scope>
    <scope>MUTAGENESIS OF GLY-1024</scope>
</reference>
<reference evidence="8" key="3">
    <citation type="journal article" date="2005" name="Mol. Cell. Biol.">
        <title>HCP-4/CENP-C promotes the prophase timing of centromere resolution by enabling the centromere association of HCP-6 in Caenorhabditis elegans.</title>
        <authorList>
            <person name="Moore L.L."/>
            <person name="Stanvitch G."/>
            <person name="Roth M.B."/>
            <person name="Rosen D."/>
        </authorList>
    </citation>
    <scope>FUNCTION</scope>
    <scope>SUBCELLULAR LOCATION</scope>
    <scope>MUTAGENESIS OF GLY-1024</scope>
</reference>
<gene>
    <name evidence="7 11" type="primary">hcp-6</name>
    <name evidence="11" type="ORF">Y110A7A.1</name>
</gene>
<organism evidence="9">
    <name type="scientific">Caenorhabditis elegans</name>
    <dbReference type="NCBI Taxonomy" id="6239"/>
    <lineage>
        <taxon>Eukaryota</taxon>
        <taxon>Metazoa</taxon>
        <taxon>Ecdysozoa</taxon>
        <taxon>Nematoda</taxon>
        <taxon>Chromadorea</taxon>
        <taxon>Rhabditida</taxon>
        <taxon>Rhabditina</taxon>
        <taxon>Rhabditomorpha</taxon>
        <taxon>Rhabditoidea</taxon>
        <taxon>Rhabditidae</taxon>
        <taxon>Peloderinae</taxon>
        <taxon>Caenorhabditis</taxon>
    </lineage>
</organism>
<protein>
    <recommendedName>
        <fullName evidence="8">Condensin-2 complex subunit hcp-6</fullName>
    </recommendedName>
    <alternativeName>
        <fullName evidence="11">Holocentric chromosome-binding protein hcp-6</fullName>
    </alternativeName>
    <alternativeName>
        <fullName evidence="7">Holocentric protein 6</fullName>
    </alternativeName>
</protein>
<sequence>MSNINEKDLSEFLESNLRSLNDIDDAVATSSAECNYEDYEEFTNSVDLTFFEQDLSGVLKELKKLAESVVISGKKCDIRNIFEESDVATMKFNLFVWYFLENGQRSDSSEEDVDKGVSAASSYIAMCSLPGAISDLYQIGLYNQCLKIIRNCCHTVRIGETVVTKKSSGAKKKKAGGKSDETNVDGEMTVTTGAADPIIGPPRIAVDSAERYLHHLTTQLFAFLHSNTFSIDTPTLMSTLEVVEDIGRLDLDNRTAGRAIRANSVHEFRSLERFTDRYCAFVHSLVESKYKTRAEVAYGRLIRPRLALMPYPDESNKSSKISTERKRSGELHVNLILSRISRNPEARELKYIQTVTVMVYSQCPDLAEFRTNIATFIHKILEALPYTYTYDFVQFMNVLFKGRGAGVKSLSTELSSILISSFDFTAPDPGAIPNLDAEQNEEEDEEEEGEDEEEEEENEQDDVAVKEEEQSDKSDEENDGDNEENVSKKKEEKKKEKKAKEVKEVGRMDAMSVLYNIVYMACLDKAAAMRLHGANSLTKILQSQSHREAFQLFCATINAEMDEKFGAVGDNLSESLEDLNVSGKAPSSKTKKPTDLLLDEQQIIQKFNKLKLMNKGETRVEKDIVYMIVRRLSTDDKAPVKKAACSLLKSYLSYCDEASKFEVVLSILQMLCRDRMVSVRKTGADAFTELMLRDAILFKESLSSKWLHTLISMLNDTDNDVTEHARKLIMKVLTPLLENSSDLTWTLLDTIESVTNHRQYLMSTLKDAVREKLVKRTVMDSMKQHIISGSEKLDGAWMVFSQLCVQFEQNVDFAIETFSRVDLSRESNLVQYMIHVIENNIKKIDDDTKSDLVNTLQGTFRDYCLHPSHSRSIYHCLGKLMDGIGDRSLHGKEFSDFGETLLIKCFDTIVQSFEMFKDKDEWKRNSESQERLLCTALNVASEVFSYSPQLVPRHERLGKTLSLIVNSTENGSSDASTVNPDMPSVHHTRPPTQLSEVPSSQKSSKGGMMSHEGAMFSDKVRAVGVVTLANMILAHDRLLKLMPMLVKQLQYNTAHQIRSNIVLAIGDICSSYKTDRYAPMLAASLCDPSVIVRRHAINQIARLISFGIFRFNGEIMIRMMLASLDANEDVRNDAKLYISEVLQSEEPNFFPLNFVQYMIALTQARRLVGVGHDEDDRGQVDVAIGGGDPLARPSRIAIYTFMIDSLDDRSRFDVKMSICQRIFTPIVNGEYDFSDYNVQCLLDDALLIMASNEMQVKMDVGKNPNENAMDDPSPEVLEAATGFMQKVYLDHYMKTIVPSILSLREFLNQHRSPLQRKCLLAIRMICIEHKNDIDEILQDNRQLKDEMMFELQRVKQRTEEANRILDEYLKRVAEFKKQQKRLSKSPAPMELDAEPVQESAEAVEMGSPARRIEEDQENVEEEVEMRTPQKKNPDADVPRTPLNALRSTTEEKSTPNARLLSPKTIKKIRRSLGALIHTEMRLNPPNLEETKIDDTTINRSKQADKTEEKTIVEEEPMEEAAAEKTVTAENDHVDAEKTVIAVEIPPATEAEEDEVVDVQSESRRSRRRKTPNYDDEESVDADGKIWKKPKIVNKSPEKEVNISANVTLRRSRRGQSTEPPVVKENSNRKRKSVDEEEENVPTSSSGNTENDPLSRGVTPLIFDESKLGAGRHCSTPIRSREDADPSDVTFSLNLSAITEKEDLKNRSKKVKLITFTISSKRMKRKADQCHCINLPSKFVLFISTVCIIVRLSAVFSLN</sequence>
<comment type="function">
    <text evidence="5 6">Chromosomal protein which is recruited to mitotic chromosomes by hcp-3 (CENP-A) and hcp-4 (CENP-C) (PubMed:12080088, PubMed:15767665). Involved in chromosome segregation during mitosis, playing a role in chromosome condensation and in maintaining chromosome morphology, rigidity and orientation during mitosis (PubMed:12080088, PubMed:15767665).</text>
</comment>
<comment type="subunit">
    <text evidence="1 3">Component of the condensin-2 complex.</text>
</comment>
<comment type="subcellular location">
    <subcellularLocation>
        <location evidence="3">Nucleus</location>
    </subcellularLocation>
    <subcellularLocation>
        <location evidence="5 6">Chromosome</location>
        <location evidence="5 6">Centromere</location>
    </subcellularLocation>
    <text evidence="5 6">Localizes to the centromere during mitosis (PubMed:12080088). Co-localizes with hcp-3 (CENP-A) at prophase, metaphase, and anaphase chromosomes (PubMed:12080088, PubMed:15767665). Mitotic chromosome localization is dependent on hcp-3 (CENP-A) and hcp-4 (CENP-C) (PubMed:12080088, PubMed:15767665). Localizes along two parallel lines on individual prophase chromosomes (PubMed:12080088). At metaphase, localizes at the poleward faces of the metaphase plate (PubMed:12080088). During anaphase, localizes with the separating groups of sister chromatids (PubMed:12080088).</text>
</comment>
<comment type="alternative products">
    <event type="alternative splicing"/>
    <isoform>
        <id>Q95Y84-1</id>
        <name evidence="11">b</name>
        <sequence type="displayed"/>
    </isoform>
    <isoform>
        <id>Q95Y84-2</id>
        <name evidence="10">a</name>
        <sequence type="described" ref="VSP_061464 VSP_061465"/>
    </isoform>
</comment>
<comment type="disruption phenotype">
    <text evidence="5">RNAi-mediated knockdown results in temperature sensitive embryonic lethality with chromosomes displaying segregation defects with increased anaphase bridges and chromosome lagging.</text>
</comment>
<evidence type="ECO:0000250" key="1">
    <source>
        <dbReference type="UniProtKB" id="P42695"/>
    </source>
</evidence>
<evidence type="ECO:0000255" key="2"/>
<evidence type="ECO:0000255" key="3">
    <source>
        <dbReference type="PIRNR" id="PIRNR036508"/>
    </source>
</evidence>
<evidence type="ECO:0000256" key="4">
    <source>
        <dbReference type="SAM" id="MobiDB-lite"/>
    </source>
</evidence>
<evidence type="ECO:0000269" key="5">
    <source>
    </source>
</evidence>
<evidence type="ECO:0000269" key="6">
    <source>
    </source>
</evidence>
<evidence type="ECO:0000303" key="7">
    <source>
    </source>
</evidence>
<evidence type="ECO:0000305" key="8"/>
<evidence type="ECO:0000312" key="9">
    <source>
        <dbReference type="Proteomes" id="UP000001940"/>
    </source>
</evidence>
<evidence type="ECO:0000312" key="10">
    <source>
        <dbReference type="WormBase" id="Y110A7A.1a"/>
    </source>
</evidence>
<evidence type="ECO:0000312" key="11">
    <source>
        <dbReference type="WormBase" id="Y110A7A.1b"/>
    </source>
</evidence>
<proteinExistence type="evidence at protein level"/>
<accession>Q95Y84</accession>
<accession>Q9N583</accession>
<keyword id="KW-0025">Alternative splicing</keyword>
<keyword id="KW-0131">Cell cycle</keyword>
<keyword id="KW-0132">Cell division</keyword>
<keyword id="KW-0137">Centromere</keyword>
<keyword id="KW-0158">Chromosome</keyword>
<keyword id="KW-0175">Coiled coil</keyword>
<keyword id="KW-0226">DNA condensation</keyword>
<keyword id="KW-0498">Mitosis</keyword>
<keyword id="KW-0539">Nucleus</keyword>
<keyword id="KW-1185">Reference proteome</keyword>
<feature type="chain" id="PRO_0000455242" description="Condensin-2 complex subunit hcp-6">
    <location>
        <begin position="1"/>
        <end position="1758"/>
    </location>
</feature>
<feature type="region of interest" description="Disordered" evidence="4">
    <location>
        <begin position="428"/>
        <end position="501"/>
    </location>
</feature>
<feature type="region of interest" description="Disordered" evidence="4">
    <location>
        <begin position="969"/>
        <end position="1008"/>
    </location>
</feature>
<feature type="region of interest" description="Disordered" evidence="4">
    <location>
        <begin position="1379"/>
        <end position="1460"/>
    </location>
</feature>
<feature type="region of interest" description="Disordered" evidence="4">
    <location>
        <begin position="1500"/>
        <end position="1656"/>
    </location>
</feature>
<feature type="coiled-coil region" evidence="2">
    <location>
        <begin position="1326"/>
        <end position="1385"/>
    </location>
</feature>
<feature type="compositionally biased region" description="Acidic residues" evidence="4">
    <location>
        <begin position="438"/>
        <end position="462"/>
    </location>
</feature>
<feature type="compositionally biased region" description="Basic and acidic residues" evidence="4">
    <location>
        <begin position="463"/>
        <end position="473"/>
    </location>
</feature>
<feature type="compositionally biased region" description="Acidic residues" evidence="4">
    <location>
        <begin position="474"/>
        <end position="484"/>
    </location>
</feature>
<feature type="compositionally biased region" description="Basic and acidic residues" evidence="4">
    <location>
        <begin position="485"/>
        <end position="501"/>
    </location>
</feature>
<feature type="compositionally biased region" description="Polar residues" evidence="4">
    <location>
        <begin position="969"/>
        <end position="979"/>
    </location>
</feature>
<feature type="compositionally biased region" description="Low complexity" evidence="4">
    <location>
        <begin position="999"/>
        <end position="1008"/>
    </location>
</feature>
<feature type="compositionally biased region" description="Acidic residues" evidence="4">
    <location>
        <begin position="1414"/>
        <end position="1423"/>
    </location>
</feature>
<feature type="compositionally biased region" description="Basic and acidic residues" evidence="4">
    <location>
        <begin position="1424"/>
        <end position="1437"/>
    </location>
</feature>
<feature type="compositionally biased region" description="Basic and acidic residues" evidence="4">
    <location>
        <begin position="1500"/>
        <end position="1512"/>
    </location>
</feature>
<feature type="compositionally biased region" description="Polar residues" evidence="4">
    <location>
        <begin position="1602"/>
        <end position="1618"/>
    </location>
</feature>
<feature type="compositionally biased region" description="Polar residues" evidence="4">
    <location>
        <begin position="1640"/>
        <end position="1651"/>
    </location>
</feature>
<feature type="splice variant" id="VSP_061464" description="In isoform a." evidence="8">
    <original>RSKKVKLITFTISSKRMKR</original>
    <variation>RKSQAYHLHNIFEEDEEES</variation>
    <location>
        <begin position="1706"/>
        <end position="1724"/>
    </location>
</feature>
<feature type="splice variant" id="VSP_061465" description="In isoform a." evidence="8">
    <location>
        <begin position="1725"/>
        <end position="1758"/>
    </location>
</feature>
<feature type="mutagenesis site" description="In mr17; chromosome segregation and orientation defects with increased anaphase bridges and chromosome lagging which have sister chromatids with a single kinetochore connected to microtubules emanating from both spindle poles. Furthermore, centromere organization is disrupted. Chromosomes display morphological impairments such as chromosome twisting, and have condensation and sister centromere attachment defects. Inhibition of spindle microtubules with the drug nocodazole, impairs sister centromere attachment defects further. Does not localize to mitotic chromosomes. Specifically, does not localize to the centromeres of metaphase chromosomes." evidence="5 6">
    <original>G</original>
    <variation>E</variation>
    <location>
        <position position="1024"/>
    </location>
</feature>